<comment type="subcellular location">
    <subcellularLocation>
        <location evidence="2">Membrane</location>
        <topology evidence="2">Single-pass membrane protein</topology>
    </subcellularLocation>
</comment>
<sequence length="217" mass="23660">MTLLSINYEKFKYIEVPELLSKLGVVFMRGYVVGLVLALMLVTAPAMAEDFSMNGTEFAAAFIKNTVSNLDLGAKFLHLLYEVNDTDTNSNLFQNLWGLVYGGVLVAGWNNQVTAEVLETLADSDNLTSQRTNISESIRMMATNTSVVFGDTEGSQGLAALMKYQVKALQNTSITTTNSTGVEVPLVEAYAEALANTITDNVKFMMELFKAIPNALT</sequence>
<protein>
    <recommendedName>
        <fullName>Uncharacterized protein AF_2183</fullName>
    </recommendedName>
</protein>
<organism>
    <name type="scientific">Archaeoglobus fulgidus (strain ATCC 49558 / DSM 4304 / JCM 9628 / NBRC 100126 / VC-16)</name>
    <dbReference type="NCBI Taxonomy" id="224325"/>
    <lineage>
        <taxon>Archaea</taxon>
        <taxon>Methanobacteriati</taxon>
        <taxon>Methanobacteriota</taxon>
        <taxon>Archaeoglobi</taxon>
        <taxon>Archaeoglobales</taxon>
        <taxon>Archaeoglobaceae</taxon>
        <taxon>Archaeoglobus</taxon>
    </lineage>
</organism>
<gene>
    <name type="ordered locus">AF_2183</name>
</gene>
<evidence type="ECO:0000255" key="1"/>
<evidence type="ECO:0000305" key="2"/>
<proteinExistence type="predicted"/>
<name>Y2183_ARCFU</name>
<dbReference type="EMBL" id="AE000782">
    <property type="protein sequence ID" value="AAB89075.1"/>
    <property type="molecule type" value="Genomic_DNA"/>
</dbReference>
<dbReference type="PIR" id="G69522">
    <property type="entry name" value="G69522"/>
</dbReference>
<dbReference type="SMR" id="O28100"/>
<dbReference type="STRING" id="224325.AF_2183"/>
<dbReference type="PaxDb" id="224325-AF_2183"/>
<dbReference type="EnsemblBacteria" id="AAB89075">
    <property type="protein sequence ID" value="AAB89075"/>
    <property type="gene ID" value="AF_2183"/>
</dbReference>
<dbReference type="KEGG" id="afu:AF_2183"/>
<dbReference type="HOGENOM" id="CLU_1507301_0_0_2"/>
<dbReference type="PhylomeDB" id="O28100"/>
<dbReference type="Proteomes" id="UP000002199">
    <property type="component" value="Chromosome"/>
</dbReference>
<dbReference type="GO" id="GO:0016020">
    <property type="term" value="C:membrane"/>
    <property type="evidence" value="ECO:0007669"/>
    <property type="project" value="UniProtKB-SubCell"/>
</dbReference>
<keyword id="KW-0472">Membrane</keyword>
<keyword id="KW-1185">Reference proteome</keyword>
<keyword id="KW-0812">Transmembrane</keyword>
<keyword id="KW-1133">Transmembrane helix</keyword>
<accession>O28100</accession>
<reference key="1">
    <citation type="journal article" date="1997" name="Nature">
        <title>The complete genome sequence of the hyperthermophilic, sulphate-reducing archaeon Archaeoglobus fulgidus.</title>
        <authorList>
            <person name="Klenk H.-P."/>
            <person name="Clayton R.A."/>
            <person name="Tomb J.-F."/>
            <person name="White O."/>
            <person name="Nelson K.E."/>
            <person name="Ketchum K.A."/>
            <person name="Dodson R.J."/>
            <person name="Gwinn M.L."/>
            <person name="Hickey E.K."/>
            <person name="Peterson J.D."/>
            <person name="Richardson D.L."/>
            <person name="Kerlavage A.R."/>
            <person name="Graham D.E."/>
            <person name="Kyrpides N.C."/>
            <person name="Fleischmann R.D."/>
            <person name="Quackenbush J."/>
            <person name="Lee N.H."/>
            <person name="Sutton G.G."/>
            <person name="Gill S.R."/>
            <person name="Kirkness E.F."/>
            <person name="Dougherty B.A."/>
            <person name="McKenney K."/>
            <person name="Adams M.D."/>
            <person name="Loftus B.J."/>
            <person name="Peterson S.N."/>
            <person name="Reich C.I."/>
            <person name="McNeil L.K."/>
            <person name="Badger J.H."/>
            <person name="Glodek A."/>
            <person name="Zhou L."/>
            <person name="Overbeek R."/>
            <person name="Gocayne J.D."/>
            <person name="Weidman J.F."/>
            <person name="McDonald L.A."/>
            <person name="Utterback T.R."/>
            <person name="Cotton M.D."/>
            <person name="Spriggs T."/>
            <person name="Artiach P."/>
            <person name="Kaine B.P."/>
            <person name="Sykes S.M."/>
            <person name="Sadow P.W."/>
            <person name="D'Andrea K.P."/>
            <person name="Bowman C."/>
            <person name="Fujii C."/>
            <person name="Garland S.A."/>
            <person name="Mason T.M."/>
            <person name="Olsen G.J."/>
            <person name="Fraser C.M."/>
            <person name="Smith H.O."/>
            <person name="Woese C.R."/>
            <person name="Venter J.C."/>
        </authorList>
    </citation>
    <scope>NUCLEOTIDE SEQUENCE [LARGE SCALE GENOMIC DNA]</scope>
    <source>
        <strain>ATCC 49558 / DSM 4304 / JCM 9628 / NBRC 100126 / VC-16</strain>
    </source>
</reference>
<feature type="chain" id="PRO_0000128114" description="Uncharacterized protein AF_2183">
    <location>
        <begin position="1"/>
        <end position="217"/>
    </location>
</feature>
<feature type="transmembrane region" description="Helical" evidence="1">
    <location>
        <begin position="26"/>
        <end position="48"/>
    </location>
</feature>